<evidence type="ECO:0000255" key="1">
    <source>
        <dbReference type="HAMAP-Rule" id="MF_00154"/>
    </source>
</evidence>
<proteinExistence type="inferred from homology"/>
<reference key="1">
    <citation type="journal article" date="2006" name="PLoS Genet.">
        <title>Comparative genomics of emerging human ehrlichiosis agents.</title>
        <authorList>
            <person name="Dunning Hotopp J.C."/>
            <person name="Lin M."/>
            <person name="Madupu R."/>
            <person name="Crabtree J."/>
            <person name="Angiuoli S.V."/>
            <person name="Eisen J.A."/>
            <person name="Seshadri R."/>
            <person name="Ren Q."/>
            <person name="Wu M."/>
            <person name="Utterback T.R."/>
            <person name="Smith S."/>
            <person name="Lewis M."/>
            <person name="Khouri H."/>
            <person name="Zhang C."/>
            <person name="Niu H."/>
            <person name="Lin Q."/>
            <person name="Ohashi N."/>
            <person name="Zhi N."/>
            <person name="Nelson W.C."/>
            <person name="Brinkac L.M."/>
            <person name="Dodson R.J."/>
            <person name="Rosovitz M.J."/>
            <person name="Sundaram J.P."/>
            <person name="Daugherty S.C."/>
            <person name="Davidsen T."/>
            <person name="Durkin A.S."/>
            <person name="Gwinn M.L."/>
            <person name="Haft D.H."/>
            <person name="Selengut J.D."/>
            <person name="Sullivan S.A."/>
            <person name="Zafar N."/>
            <person name="Zhou L."/>
            <person name="Benahmed F."/>
            <person name="Forberger H."/>
            <person name="Halpin R."/>
            <person name="Mulligan S."/>
            <person name="Robinson J."/>
            <person name="White O."/>
            <person name="Rikihisa Y."/>
            <person name="Tettelin H."/>
        </authorList>
    </citation>
    <scope>NUCLEOTIDE SEQUENCE [LARGE SCALE GENOMIC DNA]</scope>
    <source>
        <strain>HZ</strain>
    </source>
</reference>
<gene>
    <name evidence="1" type="primary">ctaB</name>
    <name type="ordered locus">APH_1086</name>
</gene>
<accession>Q2GJ17</accession>
<dbReference type="EC" id="2.5.1.141" evidence="1"/>
<dbReference type="EMBL" id="CP000235">
    <property type="protein sequence ID" value="ABD43621.1"/>
    <property type="molecule type" value="Genomic_DNA"/>
</dbReference>
<dbReference type="SMR" id="Q2GJ17"/>
<dbReference type="STRING" id="212042.APH_1086"/>
<dbReference type="PaxDb" id="212042-APH_1086"/>
<dbReference type="EnsemblBacteria" id="ABD43621">
    <property type="protein sequence ID" value="ABD43621"/>
    <property type="gene ID" value="APH_1086"/>
</dbReference>
<dbReference type="KEGG" id="aph:APH_1086"/>
<dbReference type="eggNOG" id="COG0109">
    <property type="taxonomic scope" value="Bacteria"/>
</dbReference>
<dbReference type="HOGENOM" id="CLU_029631_0_2_5"/>
<dbReference type="UniPathway" id="UPA00834">
    <property type="reaction ID" value="UER00712"/>
</dbReference>
<dbReference type="Proteomes" id="UP000001943">
    <property type="component" value="Chromosome"/>
</dbReference>
<dbReference type="GO" id="GO:0005886">
    <property type="term" value="C:plasma membrane"/>
    <property type="evidence" value="ECO:0007669"/>
    <property type="project" value="UniProtKB-SubCell"/>
</dbReference>
<dbReference type="GO" id="GO:0008495">
    <property type="term" value="F:protoheme IX farnesyltransferase activity"/>
    <property type="evidence" value="ECO:0007669"/>
    <property type="project" value="UniProtKB-UniRule"/>
</dbReference>
<dbReference type="GO" id="GO:0048034">
    <property type="term" value="P:heme O biosynthetic process"/>
    <property type="evidence" value="ECO:0007669"/>
    <property type="project" value="UniProtKB-UniRule"/>
</dbReference>
<dbReference type="CDD" id="cd13957">
    <property type="entry name" value="PT_UbiA_Cox10"/>
    <property type="match status" value="1"/>
</dbReference>
<dbReference type="Gene3D" id="1.10.357.140">
    <property type="entry name" value="UbiA prenyltransferase"/>
    <property type="match status" value="1"/>
</dbReference>
<dbReference type="HAMAP" id="MF_00154">
    <property type="entry name" value="CyoE_CtaB"/>
    <property type="match status" value="1"/>
</dbReference>
<dbReference type="InterPro" id="IPR006369">
    <property type="entry name" value="Protohaem_IX_farnesylTrfase"/>
</dbReference>
<dbReference type="InterPro" id="IPR000537">
    <property type="entry name" value="UbiA_prenyltransferase"/>
</dbReference>
<dbReference type="InterPro" id="IPR030470">
    <property type="entry name" value="UbiA_prenylTrfase_CS"/>
</dbReference>
<dbReference type="InterPro" id="IPR044878">
    <property type="entry name" value="UbiA_sf"/>
</dbReference>
<dbReference type="NCBIfam" id="TIGR01473">
    <property type="entry name" value="cyoE_ctaB"/>
    <property type="match status" value="1"/>
</dbReference>
<dbReference type="NCBIfam" id="NF003349">
    <property type="entry name" value="PRK04375.1-2"/>
    <property type="match status" value="1"/>
</dbReference>
<dbReference type="PANTHER" id="PTHR43448:SF7">
    <property type="entry name" value="4-HYDROXYBENZOATE SOLANESYLTRANSFERASE"/>
    <property type="match status" value="1"/>
</dbReference>
<dbReference type="PANTHER" id="PTHR43448">
    <property type="entry name" value="PROTOHEME IX FARNESYLTRANSFERASE, MITOCHONDRIAL"/>
    <property type="match status" value="1"/>
</dbReference>
<dbReference type="Pfam" id="PF01040">
    <property type="entry name" value="UbiA"/>
    <property type="match status" value="1"/>
</dbReference>
<dbReference type="PROSITE" id="PS00943">
    <property type="entry name" value="UBIA"/>
    <property type="match status" value="1"/>
</dbReference>
<name>COXX_ANAPZ</name>
<keyword id="KW-0997">Cell inner membrane</keyword>
<keyword id="KW-1003">Cell membrane</keyword>
<keyword id="KW-0350">Heme biosynthesis</keyword>
<keyword id="KW-0472">Membrane</keyword>
<keyword id="KW-0808">Transferase</keyword>
<keyword id="KW-0812">Transmembrane</keyword>
<keyword id="KW-1133">Transmembrane helix</keyword>
<sequence length="296" mass="32258">MVLMMGVPQHFALSTARDYWQLLKPRIMYLVVFTASTGMIMAPGTIHPLIGLVSALCIAMGSGAAGALNMWFDSDIDAVMSRTKTRPIPSGRISRAQALECGLALSLLSVFIMSLTVNYVSAILLACSIAFYAVVYTMVLKRRTPQNIVIGGIAGAFPPVIGWTSVTGIPSIESLLLFMIIFLWTPPHFWALSLLNRDEYKLAGIPMLSVYSVQSTKNHIMGYSLLLFIVALLPGLYVAETVLYEIIATSLGAVFLTHAYCLLKEVGEPSPKACMGLFSFSIYYLFLIFSAIALCS</sequence>
<protein>
    <recommendedName>
        <fullName evidence="1">Protoheme IX farnesyltransferase</fullName>
        <ecNumber evidence="1">2.5.1.141</ecNumber>
    </recommendedName>
    <alternativeName>
        <fullName evidence="1">Heme B farnesyltransferase</fullName>
    </alternativeName>
    <alternativeName>
        <fullName evidence="1">Heme O synthase</fullName>
    </alternativeName>
</protein>
<organism>
    <name type="scientific">Anaplasma phagocytophilum (strain HZ)</name>
    <dbReference type="NCBI Taxonomy" id="212042"/>
    <lineage>
        <taxon>Bacteria</taxon>
        <taxon>Pseudomonadati</taxon>
        <taxon>Pseudomonadota</taxon>
        <taxon>Alphaproteobacteria</taxon>
        <taxon>Rickettsiales</taxon>
        <taxon>Anaplasmataceae</taxon>
        <taxon>Anaplasma</taxon>
        <taxon>phagocytophilum group</taxon>
    </lineage>
</organism>
<comment type="function">
    <text evidence="1">Converts heme B (protoheme IX) to heme O by substitution of the vinyl group on carbon 2 of heme B porphyrin ring with a hydroxyethyl farnesyl side group.</text>
</comment>
<comment type="catalytic activity">
    <reaction evidence="1">
        <text>heme b + (2E,6E)-farnesyl diphosphate + H2O = Fe(II)-heme o + diphosphate</text>
        <dbReference type="Rhea" id="RHEA:28070"/>
        <dbReference type="ChEBI" id="CHEBI:15377"/>
        <dbReference type="ChEBI" id="CHEBI:33019"/>
        <dbReference type="ChEBI" id="CHEBI:60344"/>
        <dbReference type="ChEBI" id="CHEBI:60530"/>
        <dbReference type="ChEBI" id="CHEBI:175763"/>
        <dbReference type="EC" id="2.5.1.141"/>
    </reaction>
</comment>
<comment type="pathway">
    <text evidence="1">Porphyrin-containing compound metabolism; heme O biosynthesis; heme O from protoheme: step 1/1.</text>
</comment>
<comment type="subcellular location">
    <subcellularLocation>
        <location evidence="1">Cell inner membrane</location>
        <topology evidence="1">Multi-pass membrane protein</topology>
    </subcellularLocation>
</comment>
<comment type="miscellaneous">
    <text evidence="1">Carbon 2 of the heme B porphyrin ring is defined according to the Fischer nomenclature.</text>
</comment>
<comment type="similarity">
    <text evidence="1">Belongs to the UbiA prenyltransferase family. Protoheme IX farnesyltransferase subfamily.</text>
</comment>
<feature type="chain" id="PRO_0000326994" description="Protoheme IX farnesyltransferase">
    <location>
        <begin position="1"/>
        <end position="296"/>
    </location>
</feature>
<feature type="transmembrane region" description="Helical" evidence="1">
    <location>
        <begin position="27"/>
        <end position="47"/>
    </location>
</feature>
<feature type="transmembrane region" description="Helical" evidence="1">
    <location>
        <begin position="48"/>
        <end position="68"/>
    </location>
</feature>
<feature type="transmembrane region" description="Helical" evidence="1">
    <location>
        <begin position="98"/>
        <end position="118"/>
    </location>
</feature>
<feature type="transmembrane region" description="Helical" evidence="1">
    <location>
        <begin position="120"/>
        <end position="140"/>
    </location>
</feature>
<feature type="transmembrane region" description="Helical" evidence="1">
    <location>
        <begin position="148"/>
        <end position="168"/>
    </location>
</feature>
<feature type="transmembrane region" description="Helical" evidence="1">
    <location>
        <begin position="175"/>
        <end position="195"/>
    </location>
</feature>
<feature type="transmembrane region" description="Helical" evidence="1">
    <location>
        <begin position="219"/>
        <end position="239"/>
    </location>
</feature>
<feature type="transmembrane region" description="Helical" evidence="1">
    <location>
        <begin position="242"/>
        <end position="262"/>
    </location>
</feature>
<feature type="transmembrane region" description="Helical" evidence="1">
    <location>
        <begin position="274"/>
        <end position="294"/>
    </location>
</feature>